<name>DNAA_STRP1</name>
<accession>P0A3A4</accession>
<accession>Q491U8</accession>
<accession>Q9L572</accession>
<evidence type="ECO:0000255" key="1">
    <source>
        <dbReference type="HAMAP-Rule" id="MF_00377"/>
    </source>
</evidence>
<evidence type="ECO:0000269" key="2">
    <source>
    </source>
</evidence>
<dbReference type="EMBL" id="AF255728">
    <property type="protein sequence ID" value="AAF71535.1"/>
    <property type="molecule type" value="Genomic_DNA"/>
</dbReference>
<dbReference type="EMBL" id="AE004092">
    <property type="protein sequence ID" value="AAK33146.1"/>
    <property type="molecule type" value="Genomic_DNA"/>
</dbReference>
<dbReference type="EMBL" id="CP000017">
    <property type="protein sequence ID" value="AAZ50620.1"/>
    <property type="molecule type" value="Genomic_DNA"/>
</dbReference>
<dbReference type="RefSeq" id="NP_268424.1">
    <property type="nucleotide sequence ID" value="NC_002737.2"/>
</dbReference>
<dbReference type="SMR" id="P0A3A4"/>
<dbReference type="PaxDb" id="1314-HKU360_00001"/>
<dbReference type="GeneID" id="69899953"/>
<dbReference type="KEGG" id="spy:SPy_0002"/>
<dbReference type="KEGG" id="spz:M5005_Spy0001"/>
<dbReference type="PATRIC" id="fig|160490.10.peg.1"/>
<dbReference type="HOGENOM" id="CLU_026910_3_2_9"/>
<dbReference type="OMA" id="DFIHFYQ"/>
<dbReference type="Proteomes" id="UP000000750">
    <property type="component" value="Chromosome"/>
</dbReference>
<dbReference type="GO" id="GO:0005737">
    <property type="term" value="C:cytoplasm"/>
    <property type="evidence" value="ECO:0007669"/>
    <property type="project" value="UniProtKB-SubCell"/>
</dbReference>
<dbReference type="GO" id="GO:0005886">
    <property type="term" value="C:plasma membrane"/>
    <property type="evidence" value="ECO:0007669"/>
    <property type="project" value="TreeGrafter"/>
</dbReference>
<dbReference type="GO" id="GO:0005524">
    <property type="term" value="F:ATP binding"/>
    <property type="evidence" value="ECO:0007669"/>
    <property type="project" value="UniProtKB-UniRule"/>
</dbReference>
<dbReference type="GO" id="GO:0016887">
    <property type="term" value="F:ATP hydrolysis activity"/>
    <property type="evidence" value="ECO:0007669"/>
    <property type="project" value="InterPro"/>
</dbReference>
<dbReference type="GO" id="GO:0003688">
    <property type="term" value="F:DNA replication origin binding"/>
    <property type="evidence" value="ECO:0007669"/>
    <property type="project" value="UniProtKB-UniRule"/>
</dbReference>
<dbReference type="GO" id="GO:0008289">
    <property type="term" value="F:lipid binding"/>
    <property type="evidence" value="ECO:0007669"/>
    <property type="project" value="UniProtKB-KW"/>
</dbReference>
<dbReference type="GO" id="GO:0006270">
    <property type="term" value="P:DNA replication initiation"/>
    <property type="evidence" value="ECO:0007669"/>
    <property type="project" value="UniProtKB-UniRule"/>
</dbReference>
<dbReference type="GO" id="GO:0006275">
    <property type="term" value="P:regulation of DNA replication"/>
    <property type="evidence" value="ECO:0007669"/>
    <property type="project" value="UniProtKB-UniRule"/>
</dbReference>
<dbReference type="CDD" id="cd00009">
    <property type="entry name" value="AAA"/>
    <property type="match status" value="1"/>
</dbReference>
<dbReference type="CDD" id="cd06571">
    <property type="entry name" value="Bac_DnaA_C"/>
    <property type="match status" value="1"/>
</dbReference>
<dbReference type="FunFam" id="1.10.1750.10:FF:000002">
    <property type="entry name" value="Chromosomal replication initiator protein DnaA"/>
    <property type="match status" value="1"/>
</dbReference>
<dbReference type="FunFam" id="3.40.50.300:FF:000668">
    <property type="entry name" value="Chromosomal replication initiator protein DnaA"/>
    <property type="match status" value="1"/>
</dbReference>
<dbReference type="Gene3D" id="1.10.1750.10">
    <property type="match status" value="1"/>
</dbReference>
<dbReference type="Gene3D" id="1.10.8.60">
    <property type="match status" value="1"/>
</dbReference>
<dbReference type="Gene3D" id="3.40.50.300">
    <property type="entry name" value="P-loop containing nucleotide triphosphate hydrolases"/>
    <property type="match status" value="1"/>
</dbReference>
<dbReference type="HAMAP" id="MF_00377">
    <property type="entry name" value="DnaA_bact"/>
    <property type="match status" value="1"/>
</dbReference>
<dbReference type="InterPro" id="IPR003593">
    <property type="entry name" value="AAA+_ATPase"/>
</dbReference>
<dbReference type="InterPro" id="IPR001957">
    <property type="entry name" value="Chromosome_initiator_DnaA"/>
</dbReference>
<dbReference type="InterPro" id="IPR020591">
    <property type="entry name" value="Chromosome_initiator_DnaA-like"/>
</dbReference>
<dbReference type="InterPro" id="IPR018312">
    <property type="entry name" value="Chromosome_initiator_DnaA_CS"/>
</dbReference>
<dbReference type="InterPro" id="IPR013159">
    <property type="entry name" value="DnaA_C"/>
</dbReference>
<dbReference type="InterPro" id="IPR013317">
    <property type="entry name" value="DnaA_dom"/>
</dbReference>
<dbReference type="InterPro" id="IPR027417">
    <property type="entry name" value="P-loop_NTPase"/>
</dbReference>
<dbReference type="InterPro" id="IPR010921">
    <property type="entry name" value="Trp_repressor/repl_initiator"/>
</dbReference>
<dbReference type="NCBIfam" id="TIGR00362">
    <property type="entry name" value="DnaA"/>
    <property type="match status" value="1"/>
</dbReference>
<dbReference type="PANTHER" id="PTHR30050">
    <property type="entry name" value="CHROMOSOMAL REPLICATION INITIATOR PROTEIN DNAA"/>
    <property type="match status" value="1"/>
</dbReference>
<dbReference type="PANTHER" id="PTHR30050:SF2">
    <property type="entry name" value="CHROMOSOMAL REPLICATION INITIATOR PROTEIN DNAA"/>
    <property type="match status" value="1"/>
</dbReference>
<dbReference type="Pfam" id="PF00308">
    <property type="entry name" value="Bac_DnaA"/>
    <property type="match status" value="1"/>
</dbReference>
<dbReference type="Pfam" id="PF08299">
    <property type="entry name" value="Bac_DnaA_C"/>
    <property type="match status" value="1"/>
</dbReference>
<dbReference type="PRINTS" id="PR00051">
    <property type="entry name" value="DNAA"/>
</dbReference>
<dbReference type="SMART" id="SM00382">
    <property type="entry name" value="AAA"/>
    <property type="match status" value="1"/>
</dbReference>
<dbReference type="SMART" id="SM00760">
    <property type="entry name" value="Bac_DnaA_C"/>
    <property type="match status" value="1"/>
</dbReference>
<dbReference type="SUPFAM" id="SSF52540">
    <property type="entry name" value="P-loop containing nucleoside triphosphate hydrolases"/>
    <property type="match status" value="1"/>
</dbReference>
<dbReference type="SUPFAM" id="SSF48295">
    <property type="entry name" value="TrpR-like"/>
    <property type="match status" value="1"/>
</dbReference>
<dbReference type="PROSITE" id="PS01008">
    <property type="entry name" value="DNAA"/>
    <property type="match status" value="1"/>
</dbReference>
<sequence>MTENEQIFWNRVLELAQSQLKQATYEFFVHDARLLKVDKHIATIYLDQMKELFWEKNLKDVILTAGFEVYNAQISVDYVFEEDLMIEQNQTKINQKPKQQALNSLPTVTSDLNSKYSFENFIQGDENRWAVAASIAVANTPGTTYNPLFIWGGPGLGKTHLLNAIGNSVLLENPNARIKYITAENFINEFVIHIRLDTMDELKEKFRNLDLLLIDDIQSLAKKTLSGTQEEFFNTFNALHNNNKQIVLTSDRTPDHLNDLEDRLVTRFKWGLTVNITPPDFETRVAILTNKIQEYNFIFPQDTIEYLAGQFDSNVRDLEGALKDISLVANFKQIDTITVDIAAEAIRARKQDGPKMTVIPIEEIQAQVGKFYGVTVKEIKATKRTQNIVLARQVAMFLAREMTDNSLPKIGKEFGGRDHSTVLHAYNKIKNMISQDESLRIEIETIKNKIK</sequence>
<comment type="function">
    <text evidence="1">Plays an essential role in the initiation and regulation of chromosomal replication. ATP-DnaA binds to the origin of replication (oriC) to initiate formation of the DNA replication initiation complex once per cell cycle. Binds the DnaA box (a 9 base pair repeat at the origin) and separates the double-stranded (ds)DNA. Forms a right-handed helical filament on oriC DNA; dsDNA binds to the exterior of the filament while single-stranded (ss)DNA is stabiized in the filament's interior. The ATP-DnaA-oriC complex binds and stabilizes one strand of the AT-rich DNA unwinding element (DUE), permitting loading of DNA polymerase. After initiation quickly degrades to an ADP-DnaA complex that is not apt for DNA replication. Binds acidic phospholipids.</text>
</comment>
<comment type="function">
    <text evidence="2">The half-life of ATP-DnaA is 12 minutes at 37 degrees Celsius, in E.coli the half-life is about 41 minutes.</text>
</comment>
<comment type="subunit">
    <text evidence="1">Oligomerizes as a right-handed, spiral filament on DNA at oriC.</text>
</comment>
<comment type="subcellular location">
    <subcellularLocation>
        <location evidence="1">Cytoplasm</location>
    </subcellularLocation>
</comment>
<comment type="domain">
    <text evidence="1">Domain I is involved in oligomerization and binding regulators, domain II is flexibile and of varying length in different bacteria, domain III forms the AAA+ region, while domain IV binds dsDNA.</text>
</comment>
<comment type="similarity">
    <text evidence="1">Belongs to the DnaA family.</text>
</comment>
<gene>
    <name evidence="1" type="primary">dnaA</name>
    <name type="ordered locus">SPy_0002</name>
    <name type="ordered locus">M5005_Spy0001</name>
</gene>
<proteinExistence type="evidence at protein level"/>
<protein>
    <recommendedName>
        <fullName evidence="1">Chromosomal replication initiator protein DnaA</fullName>
    </recommendedName>
</protein>
<reference key="1">
    <citation type="journal article" date="2000" name="FEMS Microbiol. Lett.">
        <title>Replication origin of Streptococcus pyogenes, organization and cloning in heterologous systems.</title>
        <authorList>
            <person name="Suvorov A.N."/>
            <person name="Ferretti J.J."/>
        </authorList>
    </citation>
    <scope>NUCLEOTIDE SEQUENCE [GENOMIC DNA]</scope>
    <source>
        <strain>ATCC 700294 / SF370 / Serotype M1</strain>
    </source>
</reference>
<reference key="2">
    <citation type="journal article" date="2001" name="Proc. Natl. Acad. Sci. U.S.A.">
        <title>Complete genome sequence of an M1 strain of Streptococcus pyogenes.</title>
        <authorList>
            <person name="Ferretti J.J."/>
            <person name="McShan W.M."/>
            <person name="Ajdic D.J."/>
            <person name="Savic D.J."/>
            <person name="Savic G."/>
            <person name="Lyon K."/>
            <person name="Primeaux C."/>
            <person name="Sezate S."/>
            <person name="Suvorov A.N."/>
            <person name="Kenton S."/>
            <person name="Lai H.S."/>
            <person name="Lin S.P."/>
            <person name="Qian Y."/>
            <person name="Jia H.G."/>
            <person name="Najar F.Z."/>
            <person name="Ren Q."/>
            <person name="Zhu H."/>
            <person name="Song L."/>
            <person name="White J."/>
            <person name="Yuan X."/>
            <person name="Clifton S.W."/>
            <person name="Roe B.A."/>
            <person name="McLaughlin R.E."/>
        </authorList>
    </citation>
    <scope>NUCLEOTIDE SEQUENCE [LARGE SCALE GENOMIC DNA]</scope>
    <source>
        <strain>ATCC 700294 / SF370 / Serotype M1</strain>
    </source>
</reference>
<reference key="3">
    <citation type="journal article" date="2005" name="J. Infect. Dis.">
        <title>Evolutionary origin and emergence of a highly successful clone of serotype M1 group A Streptococcus involved multiple horizontal gene transfer events.</title>
        <authorList>
            <person name="Sumby P."/>
            <person name="Porcella S.F."/>
            <person name="Madrigal A.G."/>
            <person name="Barbian K.D."/>
            <person name="Virtaneva K."/>
            <person name="Ricklefs S.M."/>
            <person name="Sturdevant D.E."/>
            <person name="Graham M.R."/>
            <person name="Vuopio-Varkila J."/>
            <person name="Hoe N.P."/>
            <person name="Musser J.M."/>
        </authorList>
    </citation>
    <scope>NUCLEOTIDE SEQUENCE [LARGE SCALE GENOMIC DNA]</scope>
    <source>
        <strain>ATCC BAA-947 / MGAS5005 / Serotype M1</strain>
    </source>
</reference>
<reference key="4">
    <citation type="journal article" date="2009" name="J. Biol. Chem.">
        <title>Rapid exchange of bound ADP on the Staphylococcus aureus replication initiation protein DnaA.</title>
        <authorList>
            <person name="Kurokawa K."/>
            <person name="Mizumura H."/>
            <person name="Takaki T."/>
            <person name="Ishii Y."/>
            <person name="Ichihashi N."/>
            <person name="Lee B.L."/>
            <person name="Sekimizu K."/>
        </authorList>
    </citation>
    <scope>ADP- AND ATP-BINDING</scope>
    <source>
        <strain>SSI-9</strain>
    </source>
</reference>
<feature type="chain" id="PRO_0000114275" description="Chromosomal replication initiator protein DnaA">
    <location>
        <begin position="1"/>
        <end position="451"/>
    </location>
</feature>
<feature type="region of interest" description="Domain I, interacts with DnaA modulators" evidence="1">
    <location>
        <begin position="1"/>
        <end position="77"/>
    </location>
</feature>
<feature type="region of interest" description="Domain II" evidence="1">
    <location>
        <begin position="77"/>
        <end position="110"/>
    </location>
</feature>
<feature type="region of interest" description="Domain III, AAA+ region" evidence="1">
    <location>
        <begin position="111"/>
        <end position="329"/>
    </location>
</feature>
<feature type="region of interest" description="Domain IV, binds dsDNA" evidence="1">
    <location>
        <begin position="330"/>
        <end position="451"/>
    </location>
</feature>
<feature type="binding site" evidence="1">
    <location>
        <position position="155"/>
    </location>
    <ligand>
        <name>ATP</name>
        <dbReference type="ChEBI" id="CHEBI:30616"/>
    </ligand>
</feature>
<feature type="binding site" evidence="1">
    <location>
        <position position="157"/>
    </location>
    <ligand>
        <name>ATP</name>
        <dbReference type="ChEBI" id="CHEBI:30616"/>
    </ligand>
</feature>
<feature type="binding site" evidence="1">
    <location>
        <position position="158"/>
    </location>
    <ligand>
        <name>ATP</name>
        <dbReference type="ChEBI" id="CHEBI:30616"/>
    </ligand>
</feature>
<feature type="binding site" evidence="1">
    <location>
        <position position="159"/>
    </location>
    <ligand>
        <name>ATP</name>
        <dbReference type="ChEBI" id="CHEBI:30616"/>
    </ligand>
</feature>
<organism>
    <name type="scientific">Streptococcus pyogenes serotype M1</name>
    <dbReference type="NCBI Taxonomy" id="301447"/>
    <lineage>
        <taxon>Bacteria</taxon>
        <taxon>Bacillati</taxon>
        <taxon>Bacillota</taxon>
        <taxon>Bacilli</taxon>
        <taxon>Lactobacillales</taxon>
        <taxon>Streptococcaceae</taxon>
        <taxon>Streptococcus</taxon>
    </lineage>
</organism>
<keyword id="KW-0067">ATP-binding</keyword>
<keyword id="KW-0963">Cytoplasm</keyword>
<keyword id="KW-0235">DNA replication</keyword>
<keyword id="KW-0238">DNA-binding</keyword>
<keyword id="KW-0446">Lipid-binding</keyword>
<keyword id="KW-0547">Nucleotide-binding</keyword>
<keyword id="KW-1185">Reference proteome</keyword>